<name>CAV1_RABIT</name>
<dbReference type="EMBL" id="DP000006">
    <property type="protein sequence ID" value="AAY89011.1"/>
    <property type="molecule type" value="Genomic_DNA"/>
</dbReference>
<dbReference type="RefSeq" id="NP_001104542.1">
    <property type="nucleotide sequence ID" value="NM_001111072.1"/>
</dbReference>
<dbReference type="SMR" id="Q09YN6"/>
<dbReference type="FunCoup" id="Q09YN6">
    <property type="interactions" value="257"/>
</dbReference>
<dbReference type="STRING" id="9986.ENSOCUP00000012485"/>
<dbReference type="PaxDb" id="9986-ENSOCUP00000012485"/>
<dbReference type="Ensembl" id="ENSOCUT00000014518.4">
    <property type="protein sequence ID" value="ENSOCUP00000012485.2"/>
    <property type="gene ID" value="ENSOCUG00000014520.4"/>
</dbReference>
<dbReference type="GeneID" id="100008837"/>
<dbReference type="KEGG" id="ocu:100008837"/>
<dbReference type="CTD" id="857"/>
<dbReference type="eggNOG" id="ENOG502QUK5">
    <property type="taxonomic scope" value="Eukaryota"/>
</dbReference>
<dbReference type="GeneTree" id="ENSGT00950000183006"/>
<dbReference type="HOGENOM" id="CLU_102582_0_0_1"/>
<dbReference type="InParanoid" id="Q09YN6"/>
<dbReference type="OMA" id="MSGSKYV"/>
<dbReference type="OrthoDB" id="5917823at2759"/>
<dbReference type="TreeFam" id="TF315736"/>
<dbReference type="Proteomes" id="UP000001811">
    <property type="component" value="Chromosome 7"/>
</dbReference>
<dbReference type="Bgee" id="ENSOCUG00000014520">
    <property type="expression patterns" value="Expressed in left lung and 16 other cell types or tissues"/>
</dbReference>
<dbReference type="GO" id="GO:0002080">
    <property type="term" value="C:acrosomal membrane"/>
    <property type="evidence" value="ECO:0007669"/>
    <property type="project" value="Ensembl"/>
</dbReference>
<dbReference type="GO" id="GO:0005901">
    <property type="term" value="C:caveola"/>
    <property type="evidence" value="ECO:0000250"/>
    <property type="project" value="UniProtKB"/>
</dbReference>
<dbReference type="GO" id="GO:0002095">
    <property type="term" value="C:caveolar macromolecular signaling complex"/>
    <property type="evidence" value="ECO:0007669"/>
    <property type="project" value="Ensembl"/>
</dbReference>
<dbReference type="GO" id="GO:0005938">
    <property type="term" value="C:cell cortex"/>
    <property type="evidence" value="ECO:0007669"/>
    <property type="project" value="Ensembl"/>
</dbReference>
<dbReference type="GO" id="GO:0005929">
    <property type="term" value="C:cilium"/>
    <property type="evidence" value="ECO:0007669"/>
    <property type="project" value="Ensembl"/>
</dbReference>
<dbReference type="GO" id="GO:0005783">
    <property type="term" value="C:endoplasmic reticulum"/>
    <property type="evidence" value="ECO:0007669"/>
    <property type="project" value="Ensembl"/>
</dbReference>
<dbReference type="GO" id="GO:0005768">
    <property type="term" value="C:endosome"/>
    <property type="evidence" value="ECO:0000250"/>
    <property type="project" value="UniProtKB"/>
</dbReference>
<dbReference type="GO" id="GO:0005925">
    <property type="term" value="C:focal adhesion"/>
    <property type="evidence" value="ECO:0007669"/>
    <property type="project" value="Ensembl"/>
</dbReference>
<dbReference type="GO" id="GO:0000139">
    <property type="term" value="C:Golgi membrane"/>
    <property type="evidence" value="ECO:0007669"/>
    <property type="project" value="UniProtKB-SubCell"/>
</dbReference>
<dbReference type="GO" id="GO:0045121">
    <property type="term" value="C:membrane raft"/>
    <property type="evidence" value="ECO:0000250"/>
    <property type="project" value="UniProtKB"/>
</dbReference>
<dbReference type="GO" id="GO:0048471">
    <property type="term" value="C:perinuclear region of cytoplasm"/>
    <property type="evidence" value="ECO:0007669"/>
    <property type="project" value="Ensembl"/>
</dbReference>
<dbReference type="GO" id="GO:0042383">
    <property type="term" value="C:sarcolemma"/>
    <property type="evidence" value="ECO:0007669"/>
    <property type="project" value="TreeGrafter"/>
</dbReference>
<dbReference type="GO" id="GO:0051117">
    <property type="term" value="F:ATPase binding"/>
    <property type="evidence" value="ECO:0007669"/>
    <property type="project" value="Ensembl"/>
</dbReference>
<dbReference type="GO" id="GO:0042802">
    <property type="term" value="F:identical protein binding"/>
    <property type="evidence" value="ECO:0007669"/>
    <property type="project" value="Ensembl"/>
</dbReference>
<dbReference type="GO" id="GO:0070320">
    <property type="term" value="F:inward rectifier potassium channel inhibitor activity"/>
    <property type="evidence" value="ECO:0007669"/>
    <property type="project" value="Ensembl"/>
</dbReference>
<dbReference type="GO" id="GO:0050998">
    <property type="term" value="F:nitric-oxide synthase binding"/>
    <property type="evidence" value="ECO:0007669"/>
    <property type="project" value="Ensembl"/>
</dbReference>
<dbReference type="GO" id="GO:0008142">
    <property type="term" value="F:oxysterol binding"/>
    <property type="evidence" value="ECO:0000250"/>
    <property type="project" value="UniProtKB"/>
</dbReference>
<dbReference type="GO" id="GO:0016504">
    <property type="term" value="F:peptidase activator activity"/>
    <property type="evidence" value="ECO:0007669"/>
    <property type="project" value="Ensembl"/>
</dbReference>
<dbReference type="GO" id="GO:0046982">
    <property type="term" value="F:protein heterodimerization activity"/>
    <property type="evidence" value="ECO:0007669"/>
    <property type="project" value="Ensembl"/>
</dbReference>
<dbReference type="GO" id="GO:0019901">
    <property type="term" value="F:protein kinase binding"/>
    <property type="evidence" value="ECO:0007669"/>
    <property type="project" value="Ensembl"/>
</dbReference>
<dbReference type="GO" id="GO:0030292">
    <property type="term" value="F:protein tyrosine kinase inhibitor activity"/>
    <property type="evidence" value="ECO:0007669"/>
    <property type="project" value="Ensembl"/>
</dbReference>
<dbReference type="GO" id="GO:0044877">
    <property type="term" value="F:protein-containing complex binding"/>
    <property type="evidence" value="ECO:0007669"/>
    <property type="project" value="Ensembl"/>
</dbReference>
<dbReference type="GO" id="GO:0030674">
    <property type="term" value="F:protein-macromolecule adaptor activity"/>
    <property type="evidence" value="ECO:0007669"/>
    <property type="project" value="Ensembl"/>
</dbReference>
<dbReference type="GO" id="GO:0005102">
    <property type="term" value="F:signaling receptor binding"/>
    <property type="evidence" value="ECO:0007669"/>
    <property type="project" value="Ensembl"/>
</dbReference>
<dbReference type="GO" id="GO:0031267">
    <property type="term" value="F:small GTPase binding"/>
    <property type="evidence" value="ECO:0007669"/>
    <property type="project" value="Ensembl"/>
</dbReference>
<dbReference type="GO" id="GO:0044325">
    <property type="term" value="F:transmembrane transporter binding"/>
    <property type="evidence" value="ECO:0007669"/>
    <property type="project" value="Ensembl"/>
</dbReference>
<dbReference type="GO" id="GO:0001525">
    <property type="term" value="P:angiogenesis"/>
    <property type="evidence" value="ECO:0007669"/>
    <property type="project" value="Ensembl"/>
</dbReference>
<dbReference type="GO" id="GO:0038166">
    <property type="term" value="P:angiotensin-activated signaling pathway"/>
    <property type="evidence" value="ECO:0007669"/>
    <property type="project" value="Ensembl"/>
</dbReference>
<dbReference type="GO" id="GO:0097190">
    <property type="term" value="P:apoptotic signaling pathway"/>
    <property type="evidence" value="ECO:0007669"/>
    <property type="project" value="Ensembl"/>
</dbReference>
<dbReference type="GO" id="GO:0071711">
    <property type="term" value="P:basement membrane organization"/>
    <property type="evidence" value="ECO:0007669"/>
    <property type="project" value="Ensembl"/>
</dbReference>
<dbReference type="GO" id="GO:0006816">
    <property type="term" value="P:calcium ion transport"/>
    <property type="evidence" value="ECO:0007669"/>
    <property type="project" value="Ensembl"/>
</dbReference>
<dbReference type="GO" id="GO:0060070">
    <property type="term" value="P:canonical Wnt signaling pathway"/>
    <property type="evidence" value="ECO:0007669"/>
    <property type="project" value="Ensembl"/>
</dbReference>
<dbReference type="GO" id="GO:0070836">
    <property type="term" value="P:caveola assembly"/>
    <property type="evidence" value="ECO:0007669"/>
    <property type="project" value="Ensembl"/>
</dbReference>
<dbReference type="GO" id="GO:0072584">
    <property type="term" value="P:caveolin-mediated endocytosis"/>
    <property type="evidence" value="ECO:0007669"/>
    <property type="project" value="Ensembl"/>
</dbReference>
<dbReference type="GO" id="GO:0071360">
    <property type="term" value="P:cellular response to exogenous dsRNA"/>
    <property type="evidence" value="ECO:0007669"/>
    <property type="project" value="Ensembl"/>
</dbReference>
<dbReference type="GO" id="GO:0071455">
    <property type="term" value="P:cellular response to hyperoxia"/>
    <property type="evidence" value="ECO:0007669"/>
    <property type="project" value="Ensembl"/>
</dbReference>
<dbReference type="GO" id="GO:0071218">
    <property type="term" value="P:cellular response to misfolded protein"/>
    <property type="evidence" value="ECO:0007669"/>
    <property type="project" value="Ensembl"/>
</dbReference>
<dbReference type="GO" id="GO:0071560">
    <property type="term" value="P:cellular response to transforming growth factor beta stimulus"/>
    <property type="evidence" value="ECO:0007669"/>
    <property type="project" value="Ensembl"/>
</dbReference>
<dbReference type="GO" id="GO:0042632">
    <property type="term" value="P:cholesterol homeostasis"/>
    <property type="evidence" value="ECO:0007669"/>
    <property type="project" value="Ensembl"/>
</dbReference>
<dbReference type="GO" id="GO:0019221">
    <property type="term" value="P:cytokine-mediated signaling pathway"/>
    <property type="evidence" value="ECO:0007669"/>
    <property type="project" value="Ensembl"/>
</dbReference>
<dbReference type="GO" id="GO:0001935">
    <property type="term" value="P:endothelial cell proliferation"/>
    <property type="evidence" value="ECO:0007669"/>
    <property type="project" value="Ensembl"/>
</dbReference>
<dbReference type="GO" id="GO:0051649">
    <property type="term" value="P:establishment of localization in cell"/>
    <property type="evidence" value="ECO:0007669"/>
    <property type="project" value="Ensembl"/>
</dbReference>
<dbReference type="GO" id="GO:0048144">
    <property type="term" value="P:fibroblast proliferation"/>
    <property type="evidence" value="ECO:0007669"/>
    <property type="project" value="Ensembl"/>
</dbReference>
<dbReference type="GO" id="GO:0002067">
    <property type="term" value="P:glandular epithelial cell differentiation"/>
    <property type="evidence" value="ECO:0007669"/>
    <property type="project" value="Ensembl"/>
</dbReference>
<dbReference type="GO" id="GO:0038016">
    <property type="term" value="P:insulin receptor internalization"/>
    <property type="evidence" value="ECO:0007669"/>
    <property type="project" value="Ensembl"/>
</dbReference>
<dbReference type="GO" id="GO:0033484">
    <property type="term" value="P:intracellular nitric oxide homeostasis"/>
    <property type="evidence" value="ECO:0007669"/>
    <property type="project" value="Ensembl"/>
</dbReference>
<dbReference type="GO" id="GO:0007595">
    <property type="term" value="P:lactation"/>
    <property type="evidence" value="ECO:0007669"/>
    <property type="project" value="Ensembl"/>
</dbReference>
<dbReference type="GO" id="GO:0019915">
    <property type="term" value="P:lipid storage"/>
    <property type="evidence" value="ECO:0007669"/>
    <property type="project" value="Ensembl"/>
</dbReference>
<dbReference type="GO" id="GO:0060056">
    <property type="term" value="P:mammary gland involution"/>
    <property type="evidence" value="ECO:0007669"/>
    <property type="project" value="Ensembl"/>
</dbReference>
<dbReference type="GO" id="GO:0000165">
    <property type="term" value="P:MAPK cascade"/>
    <property type="evidence" value="ECO:0007669"/>
    <property type="project" value="Ensembl"/>
</dbReference>
<dbReference type="GO" id="GO:0051899">
    <property type="term" value="P:membrane depolarization"/>
    <property type="evidence" value="ECO:0007669"/>
    <property type="project" value="Ensembl"/>
</dbReference>
<dbReference type="GO" id="GO:0046716">
    <property type="term" value="P:muscle cell cellular homeostasis"/>
    <property type="evidence" value="ECO:0007669"/>
    <property type="project" value="Ensembl"/>
</dbReference>
<dbReference type="GO" id="GO:2000811">
    <property type="term" value="P:negative regulation of anoikis"/>
    <property type="evidence" value="ECO:0007669"/>
    <property type="project" value="Ensembl"/>
</dbReference>
<dbReference type="GO" id="GO:0090090">
    <property type="term" value="P:negative regulation of canonical Wnt signaling pathway"/>
    <property type="evidence" value="ECO:0007669"/>
    <property type="project" value="Ensembl"/>
</dbReference>
<dbReference type="GO" id="GO:0001960">
    <property type="term" value="P:negative regulation of cytokine-mediated signaling pathway"/>
    <property type="evidence" value="ECO:0007669"/>
    <property type="project" value="Ensembl"/>
</dbReference>
<dbReference type="GO" id="GO:0001937">
    <property type="term" value="P:negative regulation of endothelial cell proliferation"/>
    <property type="evidence" value="ECO:0007669"/>
    <property type="project" value="Ensembl"/>
</dbReference>
<dbReference type="GO" id="GO:0030857">
    <property type="term" value="P:negative regulation of epithelial cell differentiation"/>
    <property type="evidence" value="ECO:0007669"/>
    <property type="project" value="Ensembl"/>
</dbReference>
<dbReference type="GO" id="GO:0048147">
    <property type="term" value="P:negative regulation of fibroblast proliferation"/>
    <property type="evidence" value="ECO:0007669"/>
    <property type="project" value="Ensembl"/>
</dbReference>
<dbReference type="GO" id="GO:0043409">
    <property type="term" value="P:negative regulation of MAPK cascade"/>
    <property type="evidence" value="ECO:0007669"/>
    <property type="project" value="Ensembl"/>
</dbReference>
<dbReference type="GO" id="GO:0060546">
    <property type="term" value="P:negative regulation of necroptotic process"/>
    <property type="evidence" value="ECO:0007669"/>
    <property type="project" value="Ensembl"/>
</dbReference>
<dbReference type="GO" id="GO:0045019">
    <property type="term" value="P:negative regulation of nitric oxide biosynthetic process"/>
    <property type="evidence" value="ECO:0007669"/>
    <property type="project" value="Ensembl"/>
</dbReference>
<dbReference type="GO" id="GO:0048550">
    <property type="term" value="P:negative regulation of pinocytosis"/>
    <property type="evidence" value="ECO:0007669"/>
    <property type="project" value="Ensembl"/>
</dbReference>
<dbReference type="GO" id="GO:1901380">
    <property type="term" value="P:negative regulation of potassium ion transmembrane transport"/>
    <property type="evidence" value="ECO:0007669"/>
    <property type="project" value="Ensembl"/>
</dbReference>
<dbReference type="GO" id="GO:0031397">
    <property type="term" value="P:negative regulation of protein ubiquitination"/>
    <property type="evidence" value="ECO:0007669"/>
    <property type="project" value="Ensembl"/>
</dbReference>
<dbReference type="GO" id="GO:0046426">
    <property type="term" value="P:negative regulation of receptor signaling pathway via JAK-STAT"/>
    <property type="evidence" value="ECO:0007669"/>
    <property type="project" value="Ensembl"/>
</dbReference>
<dbReference type="GO" id="GO:0000122">
    <property type="term" value="P:negative regulation of transcription by RNA polymerase II"/>
    <property type="evidence" value="ECO:0007669"/>
    <property type="project" value="Ensembl"/>
</dbReference>
<dbReference type="GO" id="GO:0006809">
    <property type="term" value="P:nitric oxide biosynthetic process"/>
    <property type="evidence" value="ECO:0007669"/>
    <property type="project" value="Ensembl"/>
</dbReference>
<dbReference type="GO" id="GO:0010524">
    <property type="term" value="P:positive regulation of calcium ion transport into cytosol"/>
    <property type="evidence" value="ECO:0007669"/>
    <property type="project" value="Ensembl"/>
</dbReference>
<dbReference type="GO" id="GO:0043123">
    <property type="term" value="P:positive regulation of canonical NF-kappaB signal transduction"/>
    <property type="evidence" value="ECO:0007669"/>
    <property type="project" value="Ensembl"/>
</dbReference>
<dbReference type="GO" id="GO:0060355">
    <property type="term" value="P:positive regulation of cell adhesion molecule production"/>
    <property type="evidence" value="ECO:0007669"/>
    <property type="project" value="Ensembl"/>
</dbReference>
<dbReference type="GO" id="GO:0030335">
    <property type="term" value="P:positive regulation of cell migration"/>
    <property type="evidence" value="ECO:0007669"/>
    <property type="project" value="Ensembl"/>
</dbReference>
<dbReference type="GO" id="GO:0010875">
    <property type="term" value="P:positive regulation of cholesterol efflux"/>
    <property type="evidence" value="ECO:0007669"/>
    <property type="project" value="Ensembl"/>
</dbReference>
<dbReference type="GO" id="GO:0120162">
    <property type="term" value="P:positive regulation of cold-induced thermogenesis"/>
    <property type="evidence" value="ECO:0007669"/>
    <property type="project" value="Ensembl"/>
</dbReference>
<dbReference type="GO" id="GO:1904294">
    <property type="term" value="P:positive regulation of ERAD pathway"/>
    <property type="evidence" value="ECO:0007669"/>
    <property type="project" value="Ensembl"/>
</dbReference>
<dbReference type="GO" id="GO:2001238">
    <property type="term" value="P:positive regulation of extrinsic apoptotic signaling pathway"/>
    <property type="evidence" value="ECO:0007669"/>
    <property type="project" value="Ensembl"/>
</dbReference>
<dbReference type="GO" id="GO:1903598">
    <property type="term" value="P:positive regulation of gap junction assembly"/>
    <property type="evidence" value="ECO:0007669"/>
    <property type="project" value="Ensembl"/>
</dbReference>
<dbReference type="GO" id="GO:0010628">
    <property type="term" value="P:positive regulation of gene expression"/>
    <property type="evidence" value="ECO:0007669"/>
    <property type="project" value="Ensembl"/>
</dbReference>
<dbReference type="GO" id="GO:2001244">
    <property type="term" value="P:positive regulation of intrinsic apoptotic signaling pathway"/>
    <property type="evidence" value="ECO:0007669"/>
    <property type="project" value="Ensembl"/>
</dbReference>
<dbReference type="GO" id="GO:0031398">
    <property type="term" value="P:positive regulation of protein ubiquitination"/>
    <property type="evidence" value="ECO:0007669"/>
    <property type="project" value="Ensembl"/>
</dbReference>
<dbReference type="GO" id="GO:0034141">
    <property type="term" value="P:positive regulation of toll-like receptor 3 signaling pathway"/>
    <property type="evidence" value="ECO:0007669"/>
    <property type="project" value="Ensembl"/>
</dbReference>
<dbReference type="GO" id="GO:0045907">
    <property type="term" value="P:positive regulation of vasoconstriction"/>
    <property type="evidence" value="ECO:0007669"/>
    <property type="project" value="Ensembl"/>
</dbReference>
<dbReference type="GO" id="GO:0010608">
    <property type="term" value="P:post-transcriptional regulation of gene expression"/>
    <property type="evidence" value="ECO:0007669"/>
    <property type="project" value="Ensembl"/>
</dbReference>
<dbReference type="GO" id="GO:0015031">
    <property type="term" value="P:protein transport"/>
    <property type="evidence" value="ECO:0007669"/>
    <property type="project" value="Ensembl"/>
</dbReference>
<dbReference type="GO" id="GO:0031623">
    <property type="term" value="P:receptor internalization"/>
    <property type="evidence" value="ECO:0000250"/>
    <property type="project" value="UniProtKB"/>
</dbReference>
<dbReference type="GO" id="GO:0019065">
    <property type="term" value="P:receptor-mediated endocytosis of virus by host cell"/>
    <property type="evidence" value="ECO:0007669"/>
    <property type="project" value="Ensembl"/>
</dbReference>
<dbReference type="GO" id="GO:0030193">
    <property type="term" value="P:regulation of blood coagulation"/>
    <property type="evidence" value="ECO:0007669"/>
    <property type="project" value="Ensembl"/>
</dbReference>
<dbReference type="GO" id="GO:1901844">
    <property type="term" value="P:regulation of cell communication by electrical coupling involved in cardiac conduction"/>
    <property type="evidence" value="ECO:0007669"/>
    <property type="project" value="Ensembl"/>
</dbReference>
<dbReference type="GO" id="GO:0051480">
    <property type="term" value="P:regulation of cytosolic calcium ion concentration"/>
    <property type="evidence" value="ECO:0007669"/>
    <property type="project" value="Ensembl"/>
</dbReference>
<dbReference type="GO" id="GO:2000535">
    <property type="term" value="P:regulation of entry of bacterium into host cell"/>
    <property type="evidence" value="ECO:0007669"/>
    <property type="project" value="Ensembl"/>
</dbReference>
<dbReference type="GO" id="GO:0019217">
    <property type="term" value="P:regulation of fatty acid metabolic process"/>
    <property type="evidence" value="ECO:0007669"/>
    <property type="project" value="Ensembl"/>
</dbReference>
<dbReference type="GO" id="GO:0086091">
    <property type="term" value="P:regulation of heart rate by cardiac conduction"/>
    <property type="evidence" value="ECO:0007669"/>
    <property type="project" value="Ensembl"/>
</dbReference>
<dbReference type="GO" id="GO:0098903">
    <property type="term" value="P:regulation of membrane repolarization during action potential"/>
    <property type="evidence" value="ECO:0007669"/>
    <property type="project" value="Ensembl"/>
</dbReference>
<dbReference type="GO" id="GO:1900027">
    <property type="term" value="P:regulation of ruffle assembly"/>
    <property type="evidence" value="ECO:0007669"/>
    <property type="project" value="Ensembl"/>
</dbReference>
<dbReference type="GO" id="GO:0006940">
    <property type="term" value="P:regulation of smooth muscle contraction"/>
    <property type="evidence" value="ECO:0007669"/>
    <property type="project" value="Ensembl"/>
</dbReference>
<dbReference type="GO" id="GO:0003057">
    <property type="term" value="P:regulation of the force of heart contraction by chemical signal"/>
    <property type="evidence" value="ECO:0007669"/>
    <property type="project" value="Ensembl"/>
</dbReference>
<dbReference type="GO" id="GO:0098911">
    <property type="term" value="P:regulation of ventricular cardiac muscle cell action potential"/>
    <property type="evidence" value="ECO:0007669"/>
    <property type="project" value="Ensembl"/>
</dbReference>
<dbReference type="GO" id="GO:0009617">
    <property type="term" value="P:response to bacterium"/>
    <property type="evidence" value="ECO:0007669"/>
    <property type="project" value="Ensembl"/>
</dbReference>
<dbReference type="GO" id="GO:0051592">
    <property type="term" value="P:response to calcium ion"/>
    <property type="evidence" value="ECO:0007669"/>
    <property type="project" value="Ensembl"/>
</dbReference>
<dbReference type="GO" id="GO:0043627">
    <property type="term" value="P:response to estrogen"/>
    <property type="evidence" value="ECO:0007669"/>
    <property type="project" value="Ensembl"/>
</dbReference>
<dbReference type="GO" id="GO:0001666">
    <property type="term" value="P:response to hypoxia"/>
    <property type="evidence" value="ECO:0007669"/>
    <property type="project" value="Ensembl"/>
</dbReference>
<dbReference type="GO" id="GO:0002931">
    <property type="term" value="P:response to ischemia"/>
    <property type="evidence" value="ECO:0007669"/>
    <property type="project" value="Ensembl"/>
</dbReference>
<dbReference type="GO" id="GO:0032570">
    <property type="term" value="P:response to progesterone"/>
    <property type="evidence" value="ECO:0007669"/>
    <property type="project" value="Ensembl"/>
</dbReference>
<dbReference type="GO" id="GO:0007519">
    <property type="term" value="P:skeletal muscle tissue development"/>
    <property type="evidence" value="ECO:0007669"/>
    <property type="project" value="Ensembl"/>
</dbReference>
<dbReference type="GO" id="GO:0031295">
    <property type="term" value="P:T cell costimulation"/>
    <property type="evidence" value="ECO:0000250"/>
    <property type="project" value="UniProtKB"/>
</dbReference>
<dbReference type="GO" id="GO:0006641">
    <property type="term" value="P:triglyceride metabolic process"/>
    <property type="evidence" value="ECO:0007669"/>
    <property type="project" value="Ensembl"/>
</dbReference>
<dbReference type="GO" id="GO:0001570">
    <property type="term" value="P:vasculogenesis"/>
    <property type="evidence" value="ECO:0007669"/>
    <property type="project" value="Ensembl"/>
</dbReference>
<dbReference type="GO" id="GO:0042310">
    <property type="term" value="P:vasoconstriction"/>
    <property type="evidence" value="ECO:0007669"/>
    <property type="project" value="Ensembl"/>
</dbReference>
<dbReference type="InterPro" id="IPR001612">
    <property type="entry name" value="Caveolin"/>
</dbReference>
<dbReference type="InterPro" id="IPR018361">
    <property type="entry name" value="Caveolin_CS"/>
</dbReference>
<dbReference type="PANTHER" id="PTHR10844">
    <property type="entry name" value="CAVEOLIN"/>
    <property type="match status" value="1"/>
</dbReference>
<dbReference type="PANTHER" id="PTHR10844:SF18">
    <property type="entry name" value="CAVEOLIN-1"/>
    <property type="match status" value="1"/>
</dbReference>
<dbReference type="Pfam" id="PF01146">
    <property type="entry name" value="Caveolin"/>
    <property type="match status" value="1"/>
</dbReference>
<dbReference type="PROSITE" id="PS01210">
    <property type="entry name" value="CAVEOLIN"/>
    <property type="match status" value="1"/>
</dbReference>
<sequence length="178" mass="20568">MSGGKYVDSEGHLYTVPIREQGNIYKPNNKAMADEVNEKQVYDAHTKEIDLVNRDPKHLNDDVVKIDFEDVIAEPEGTHSFDGIWKASFTTFTVTKYWFYRLLSTIFGIPMALIWGIYFAILSFLHIWAVVPCIKSFLIEIQCISRVYSIYVHTFCDPLFEAIGKIFSNVRISMQKEI</sequence>
<protein>
    <recommendedName>
        <fullName>Caveolin-1</fullName>
    </recommendedName>
</protein>
<keyword id="KW-0007">Acetylation</keyword>
<keyword id="KW-1003">Cell membrane</keyword>
<keyword id="KW-0333">Golgi apparatus</keyword>
<keyword id="KW-1017">Isopeptide bond</keyword>
<keyword id="KW-0449">Lipoprotein</keyword>
<keyword id="KW-0472">Membrane</keyword>
<keyword id="KW-0564">Palmitate</keyword>
<keyword id="KW-0597">Phosphoprotein</keyword>
<keyword id="KW-1185">Reference proteome</keyword>
<keyword id="KW-0832">Ubl conjugation</keyword>
<evidence type="ECO:0000250" key="1"/>
<evidence type="ECO:0000250" key="2">
    <source>
        <dbReference type="UniProtKB" id="P41350"/>
    </source>
</evidence>
<evidence type="ECO:0000250" key="3">
    <source>
        <dbReference type="UniProtKB" id="P49817"/>
    </source>
</evidence>
<evidence type="ECO:0000250" key="4">
    <source>
        <dbReference type="UniProtKB" id="Q03135"/>
    </source>
</evidence>
<evidence type="ECO:0000250" key="5">
    <source>
        <dbReference type="UniProtKB" id="Q2IBA5"/>
    </source>
</evidence>
<evidence type="ECO:0000255" key="6"/>
<evidence type="ECO:0000305" key="7"/>
<gene>
    <name type="primary">CAV1</name>
</gene>
<proteinExistence type="inferred from homology"/>
<accession>Q09YN6</accession>
<feature type="initiator methionine" description="Removed" evidence="4">
    <location>
        <position position="1"/>
    </location>
</feature>
<feature type="chain" id="PRO_0000260373" description="Caveolin-1">
    <location>
        <begin position="2"/>
        <end position="178"/>
    </location>
</feature>
<feature type="topological domain" description="Cytoplasmic" evidence="6">
    <location>
        <begin position="2"/>
        <end position="104"/>
    </location>
</feature>
<feature type="intramembrane region" description="Helical" evidence="6">
    <location>
        <begin position="105"/>
        <end position="125"/>
    </location>
</feature>
<feature type="topological domain" description="Cytoplasmic" evidence="6">
    <location>
        <begin position="126"/>
        <end position="178"/>
    </location>
</feature>
<feature type="region of interest" description="Required for homooligomerization" evidence="4">
    <location>
        <begin position="2"/>
        <end position="94"/>
    </location>
</feature>
<feature type="region of interest" description="Interaction with CAVIN3" evidence="4">
    <location>
        <begin position="82"/>
        <end position="94"/>
    </location>
</feature>
<feature type="region of interest" description="Interacts with SPRY1, SPRY2, SPRY3 and SPRY4" evidence="3">
    <location>
        <begin position="131"/>
        <end position="142"/>
    </location>
</feature>
<feature type="region of interest" description="Interacts with SPRY1, SPRY2, and SPRY4" evidence="3">
    <location>
        <begin position="149"/>
        <end position="160"/>
    </location>
</feature>
<feature type="region of interest" description="Interacts with SPRY1, SPRY2, SPRY3 and SPRY4" evidence="3">
    <location>
        <begin position="167"/>
        <end position="178"/>
    </location>
</feature>
<feature type="modified residue" description="N-acetylserine" evidence="4">
    <location>
        <position position="2"/>
    </location>
</feature>
<feature type="modified residue" description="Phosphoserine" evidence="2">
    <location>
        <position position="2"/>
    </location>
</feature>
<feature type="modified residue" description="N6-acetyllysine; alternate" evidence="4">
    <location>
        <position position="5"/>
    </location>
</feature>
<feature type="modified residue" description="Phosphotyrosine" evidence="4">
    <location>
        <position position="6"/>
    </location>
</feature>
<feature type="modified residue" description="Phosphoserine" evidence="3">
    <location>
        <position position="9"/>
    </location>
</feature>
<feature type="modified residue" description="Phosphotyrosine; by ABL1" evidence="3">
    <location>
        <position position="14"/>
    </location>
</feature>
<feature type="modified residue" description="Phosphotyrosine" evidence="4">
    <location>
        <position position="25"/>
    </location>
</feature>
<feature type="lipid moiety-binding region" description="S-palmitoyl cysteine" evidence="1">
    <location>
        <position position="133"/>
    </location>
</feature>
<feature type="lipid moiety-binding region" description="S-palmitoyl cysteine" evidence="1">
    <location>
        <position position="143"/>
    </location>
</feature>
<feature type="lipid moiety-binding region" description="S-palmitoyl cysteine" evidence="1">
    <location>
        <position position="156"/>
    </location>
</feature>
<feature type="cross-link" description="Glycyl lysine isopeptide (Lys-Gly) (interchain with G-Cter in ubiquitin); alternate" evidence="4">
    <location>
        <position position="5"/>
    </location>
</feature>
<feature type="cross-link" description="Glycyl lysine isopeptide (Lys-Gly) (interchain with G-Cter in ubiquitin)" evidence="4">
    <location>
        <position position="26"/>
    </location>
</feature>
<feature type="cross-link" description="Glycyl lysine isopeptide (Lys-Gly) (interchain with G-Cter in ubiquitin)" evidence="4">
    <location>
        <position position="30"/>
    </location>
</feature>
<feature type="cross-link" description="Glycyl lysine isopeptide (Lys-Gly) (interchain with G-Cter in ubiquitin)" evidence="4">
    <location>
        <position position="39"/>
    </location>
</feature>
<feature type="cross-link" description="Glycyl lysine isopeptide (Lys-Gly) (interchain with G-Cter in ubiquitin)" evidence="4">
    <location>
        <position position="47"/>
    </location>
</feature>
<feature type="cross-link" description="Glycyl lysine isopeptide (Lys-Gly) (interchain with G-Cter in ubiquitin)" evidence="4">
    <location>
        <position position="57"/>
    </location>
</feature>
<organism>
    <name type="scientific">Oryctolagus cuniculus</name>
    <name type="common">Rabbit</name>
    <dbReference type="NCBI Taxonomy" id="9986"/>
    <lineage>
        <taxon>Eukaryota</taxon>
        <taxon>Metazoa</taxon>
        <taxon>Chordata</taxon>
        <taxon>Craniata</taxon>
        <taxon>Vertebrata</taxon>
        <taxon>Euteleostomi</taxon>
        <taxon>Mammalia</taxon>
        <taxon>Eutheria</taxon>
        <taxon>Euarchontoglires</taxon>
        <taxon>Glires</taxon>
        <taxon>Lagomorpha</taxon>
        <taxon>Leporidae</taxon>
        <taxon>Oryctolagus</taxon>
    </lineage>
</organism>
<reference key="1">
    <citation type="submission" date="2006-09" db="EMBL/GenBank/DDBJ databases">
        <title>NISC comparative sequencing initiative.</title>
        <authorList>
            <person name="Antonellis A."/>
            <person name="Ayele K."/>
            <person name="Benjamin B."/>
            <person name="Blakesley R.W."/>
            <person name="Boakye A."/>
            <person name="Bouffard G.G."/>
            <person name="Brinkley C."/>
            <person name="Brooks S."/>
            <person name="Chu G."/>
            <person name="Coleman H."/>
            <person name="Engle J."/>
            <person name="Gestole M."/>
            <person name="Greene A."/>
            <person name="Guan X."/>
            <person name="Gupta J."/>
            <person name="Haghighi P."/>
            <person name="Han J."/>
            <person name="Hansen N."/>
            <person name="Ho S.-L."/>
            <person name="Hu P."/>
            <person name="Hunter G."/>
            <person name="Hurle B."/>
            <person name="Idol J.R."/>
            <person name="Kwong P."/>
            <person name="Laric P."/>
            <person name="Larson S."/>
            <person name="Lee-Lin S.-Q."/>
            <person name="Legaspi R."/>
            <person name="Madden M."/>
            <person name="Maduro Q.L."/>
            <person name="Maduro V.B."/>
            <person name="Margulies E.H."/>
            <person name="Masiello C."/>
            <person name="Maskeri B."/>
            <person name="McDowell J."/>
            <person name="Mojidi H.A."/>
            <person name="Mullikin J.C."/>
            <person name="Oestreicher J.S."/>
            <person name="Park M."/>
            <person name="Portnoy M.E."/>
            <person name="Prasad A."/>
            <person name="Puri O."/>
            <person name="Reddix-Dugue N."/>
            <person name="Schandler K."/>
            <person name="Schueler M.G."/>
            <person name="Sison C."/>
            <person name="Stantripop S."/>
            <person name="Stephen E."/>
            <person name="Taye A."/>
            <person name="Thomas J.W."/>
            <person name="Thomas P.J."/>
            <person name="Tsipouri V."/>
            <person name="Ung L."/>
            <person name="Vogt J.L."/>
            <person name="Wetherby K.D."/>
            <person name="Young A."/>
            <person name="Green E.D."/>
        </authorList>
    </citation>
    <scope>NUCLEOTIDE SEQUENCE [LARGE SCALE GENOMIC DNA]</scope>
</reference>
<comment type="function">
    <text evidence="3 4">May act as a scaffolding protein within caveolar membranes. Forms a stable heterooligomeric complex with CAV2 that targets to lipid rafts and drives caveolae formation. Mediates the recruitment of CAVIN proteins (CAVIN1/2/3/4) to the caveolae (By similarity). Interacts directly with G-protein alpha subunits and can functionally regulate their activity (By similarity). Involved in the costimulatory signal essential for T-cell receptor (TCR)-mediated T-cell activation. Its binding to DPP4 induces T-cell proliferation and NF-kappa-B activation in a T-cell receptor/CD3-dependent manner (By similarity). Recruits CTNNB1 to caveolar membranes and may regulate CTNNB1-mediated signaling through the Wnt pathway (By similarity). Negatively regulates TGFB1-mediated activation of SMAD2/3 by mediating the internalization of TGFBR1 from membrane rafts leading to its subsequent degradation (By similarity). Binds 20(S)-hydroxycholesterol (20(S)-OHC) (By similarity).</text>
</comment>
<comment type="subunit">
    <text evidence="2 3 4 5">Homooligomer. Interacts with GLIPR2. Interacts with NOSTRIN (By similarity). Interacts with SNAP25 and STX1A (By similarity). Interacts (via the N-terminus) with DPP4; the interaction is direct (By similarity). Interacts with CTNNB1, CDH1 and JUP. Interacts with PACSIN2; this interaction induces membrane tubulation (By similarity). Interacts with SLC7A9 (By similarity). Interacts with BMX and BTK. Interacts with TGFBR1. Interacts with CAVIN3 (via leucine-zipper domain) in a cholesterol-sensitive manner. Interacts with CAVIN1. Interacts with EHD2 in a cholesterol-dependent manner. Forms a ternary complex with UBXN6 and VCP; mediates CAV1 targeting to lysosomes for degradation. Interacts with ABCG1; this interaction regulates ABCG1-mediated cholesterol efflux (By similarity). Interacts with NEU3; this interaction enhances NEU3 sialidase activity within caveola. Interacts (via C-terminus) with SPRY1, SPRY2 (via C-terminus), SPRY3, and SPRY4 (By similarity). Interacts with IGFBP5; this interaction allows trafficking of IGFBP5 from the plasma membrane to the nucleus (By similarity).</text>
</comment>
<comment type="subcellular location">
    <subcellularLocation>
        <location evidence="1">Golgi apparatus membrane</location>
        <topology evidence="1">Peripheral membrane protein</topology>
    </subcellularLocation>
    <subcellularLocation>
        <location evidence="1">Cell membrane</location>
        <topology evidence="1">Peripheral membrane protein</topology>
    </subcellularLocation>
    <subcellularLocation>
        <location evidence="3">Membrane</location>
        <location evidence="3">Caveola</location>
        <topology evidence="1">Peripheral membrane protein</topology>
    </subcellularLocation>
    <subcellularLocation>
        <location evidence="4">Membrane raft</location>
    </subcellularLocation>
    <text evidence="1">Colocalized with DPP4 in membrane rafts. Potential hairpin-like structure in the membrane. Membrane protein of caveolae (By similarity).</text>
</comment>
<comment type="PTM">
    <text evidence="4">Phosphorylated at Tyr-14 by ABL1 in response to oxidative stress.</text>
</comment>
<comment type="PTM">
    <text evidence="4">Ubiquitinated. Undergo monoubiquitination and multi- and/or polyubiquitination. Monoubiquitination of N-terminal lysines promotes integration in a ternary complex with UBXN6 and VCP which promotes oligomeric CAV1 targeting to lysosomes for degradation. Ubiquitinated by ZNRF1; leading to degradation and modulation of the TLR4-mediated immune response.</text>
</comment>
<comment type="similarity">
    <text evidence="7">Belongs to the caveolin family.</text>
</comment>